<accession>Q1AXG1</accession>
<proteinExistence type="inferred from homology"/>
<protein>
    <recommendedName>
        <fullName evidence="1">D-ribose pyranase 1</fullName>
        <ecNumber evidence="1">5.4.99.62</ecNumber>
    </recommendedName>
</protein>
<comment type="function">
    <text evidence="1">Catalyzes the interconversion of beta-pyran and beta-furan forms of D-ribose.</text>
</comment>
<comment type="catalytic activity">
    <reaction evidence="1">
        <text>beta-D-ribopyranose = beta-D-ribofuranose</text>
        <dbReference type="Rhea" id="RHEA:25432"/>
        <dbReference type="ChEBI" id="CHEBI:27476"/>
        <dbReference type="ChEBI" id="CHEBI:47002"/>
        <dbReference type="EC" id="5.4.99.62"/>
    </reaction>
</comment>
<comment type="pathway">
    <text evidence="1">Carbohydrate metabolism; D-ribose degradation; D-ribose 5-phosphate from beta-D-ribopyranose: step 1/2.</text>
</comment>
<comment type="subunit">
    <text evidence="1">Homodecamer.</text>
</comment>
<comment type="subcellular location">
    <subcellularLocation>
        <location evidence="1">Cytoplasm</location>
    </subcellularLocation>
</comment>
<comment type="similarity">
    <text evidence="1">Belongs to the RbsD / FucU family. RbsD subfamily.</text>
</comment>
<evidence type="ECO:0000255" key="1">
    <source>
        <dbReference type="HAMAP-Rule" id="MF_01661"/>
    </source>
</evidence>
<name>RBSD1_RUBXD</name>
<reference key="1">
    <citation type="submission" date="2006-06" db="EMBL/GenBank/DDBJ databases">
        <title>Complete sequence of Rubrobacter xylanophilus DSM 9941.</title>
        <authorList>
            <consortium name="US DOE Joint Genome Institute"/>
            <person name="Copeland A."/>
            <person name="Lucas S."/>
            <person name="Lapidus A."/>
            <person name="Barry K."/>
            <person name="Detter J.C."/>
            <person name="Glavina del Rio T."/>
            <person name="Hammon N."/>
            <person name="Israni S."/>
            <person name="Dalin E."/>
            <person name="Tice H."/>
            <person name="Pitluck S."/>
            <person name="Munk A.C."/>
            <person name="Brettin T."/>
            <person name="Bruce D."/>
            <person name="Han C."/>
            <person name="Tapia R."/>
            <person name="Gilna P."/>
            <person name="Schmutz J."/>
            <person name="Larimer F."/>
            <person name="Land M."/>
            <person name="Hauser L."/>
            <person name="Kyrpides N."/>
            <person name="Lykidis A."/>
            <person name="da Costa M.S."/>
            <person name="Rainey F.A."/>
            <person name="Empadinhas N."/>
            <person name="Jolivet E."/>
            <person name="Battista J.R."/>
            <person name="Richardson P."/>
        </authorList>
    </citation>
    <scope>NUCLEOTIDE SEQUENCE [LARGE SCALE GENOMIC DNA]</scope>
    <source>
        <strain>DSM 9941 / JCM 11954 / NBRC 16129 / PRD-1</strain>
    </source>
</reference>
<sequence>MKRGGIVNAQLAGALARLGHTDTLVVCDAGLPIPHGPEVVDLAFRLGIPGFGPVLEGILEELVVEEAVAAREVEGANPDCHALLASRLPELKLVPHWELKLRAADARLVVRTGEATPYSNVILRCGVPF</sequence>
<organism>
    <name type="scientific">Rubrobacter xylanophilus (strain DSM 9941 / JCM 11954 / NBRC 16129 / PRD-1)</name>
    <dbReference type="NCBI Taxonomy" id="266117"/>
    <lineage>
        <taxon>Bacteria</taxon>
        <taxon>Bacillati</taxon>
        <taxon>Actinomycetota</taxon>
        <taxon>Rubrobacteria</taxon>
        <taxon>Rubrobacterales</taxon>
        <taxon>Rubrobacteraceae</taxon>
        <taxon>Rubrobacter</taxon>
    </lineage>
</organism>
<feature type="chain" id="PRO_0000346246" description="D-ribose pyranase 1">
    <location>
        <begin position="1"/>
        <end position="129"/>
    </location>
</feature>
<feature type="active site" description="Proton donor" evidence="1">
    <location>
        <position position="20"/>
    </location>
</feature>
<feature type="binding site" evidence="1">
    <location>
        <position position="28"/>
    </location>
    <ligand>
        <name>substrate</name>
    </ligand>
</feature>
<feature type="binding site" evidence="1">
    <location>
        <position position="96"/>
    </location>
    <ligand>
        <name>substrate</name>
    </ligand>
</feature>
<feature type="binding site" evidence="1">
    <location>
        <begin position="118"/>
        <end position="120"/>
    </location>
    <ligand>
        <name>substrate</name>
    </ligand>
</feature>
<dbReference type="EC" id="5.4.99.62" evidence="1"/>
<dbReference type="EMBL" id="CP000386">
    <property type="protein sequence ID" value="ABG03917.1"/>
    <property type="molecule type" value="Genomic_DNA"/>
</dbReference>
<dbReference type="RefSeq" id="WP_011563935.1">
    <property type="nucleotide sequence ID" value="NC_008148.1"/>
</dbReference>
<dbReference type="SMR" id="Q1AXG1"/>
<dbReference type="STRING" id="266117.Rxyl_0950"/>
<dbReference type="KEGG" id="rxy:Rxyl_0950"/>
<dbReference type="eggNOG" id="COG1869">
    <property type="taxonomic scope" value="Bacteria"/>
</dbReference>
<dbReference type="HOGENOM" id="CLU_135498_0_0_11"/>
<dbReference type="OrthoDB" id="9805009at2"/>
<dbReference type="PhylomeDB" id="Q1AXG1"/>
<dbReference type="UniPathway" id="UPA00916">
    <property type="reaction ID" value="UER00888"/>
</dbReference>
<dbReference type="Proteomes" id="UP000006637">
    <property type="component" value="Chromosome"/>
</dbReference>
<dbReference type="GO" id="GO:0005829">
    <property type="term" value="C:cytosol"/>
    <property type="evidence" value="ECO:0007669"/>
    <property type="project" value="TreeGrafter"/>
</dbReference>
<dbReference type="GO" id="GO:0062193">
    <property type="term" value="F:D-ribose pyranase activity"/>
    <property type="evidence" value="ECO:0007669"/>
    <property type="project" value="UniProtKB-EC"/>
</dbReference>
<dbReference type="GO" id="GO:0016872">
    <property type="term" value="F:intramolecular lyase activity"/>
    <property type="evidence" value="ECO:0007669"/>
    <property type="project" value="UniProtKB-UniRule"/>
</dbReference>
<dbReference type="GO" id="GO:0048029">
    <property type="term" value="F:monosaccharide binding"/>
    <property type="evidence" value="ECO:0007669"/>
    <property type="project" value="InterPro"/>
</dbReference>
<dbReference type="GO" id="GO:0019303">
    <property type="term" value="P:D-ribose catabolic process"/>
    <property type="evidence" value="ECO:0007669"/>
    <property type="project" value="UniProtKB-UniRule"/>
</dbReference>
<dbReference type="Gene3D" id="3.40.1650.10">
    <property type="entry name" value="RbsD-like domain"/>
    <property type="match status" value="1"/>
</dbReference>
<dbReference type="HAMAP" id="MF_01661">
    <property type="entry name" value="D_rib_pyranase"/>
    <property type="match status" value="1"/>
</dbReference>
<dbReference type="InterPro" id="IPR023064">
    <property type="entry name" value="D-ribose_pyranase"/>
</dbReference>
<dbReference type="InterPro" id="IPR023750">
    <property type="entry name" value="RbsD-like_sf"/>
</dbReference>
<dbReference type="InterPro" id="IPR007721">
    <property type="entry name" value="RbsD_FucU"/>
</dbReference>
<dbReference type="NCBIfam" id="NF008761">
    <property type="entry name" value="PRK11797.1"/>
    <property type="match status" value="1"/>
</dbReference>
<dbReference type="PANTHER" id="PTHR37831">
    <property type="entry name" value="D-RIBOSE PYRANASE"/>
    <property type="match status" value="1"/>
</dbReference>
<dbReference type="PANTHER" id="PTHR37831:SF1">
    <property type="entry name" value="D-RIBOSE PYRANASE"/>
    <property type="match status" value="1"/>
</dbReference>
<dbReference type="Pfam" id="PF05025">
    <property type="entry name" value="RbsD_FucU"/>
    <property type="match status" value="1"/>
</dbReference>
<dbReference type="SUPFAM" id="SSF102546">
    <property type="entry name" value="RbsD-like"/>
    <property type="match status" value="1"/>
</dbReference>
<gene>
    <name evidence="1" type="primary">rbsD1</name>
    <name type="ordered locus">Rxyl_0950</name>
</gene>
<keyword id="KW-0119">Carbohydrate metabolism</keyword>
<keyword id="KW-0963">Cytoplasm</keyword>
<keyword id="KW-0413">Isomerase</keyword>
<keyword id="KW-1185">Reference proteome</keyword>